<dbReference type="EMBL" id="AB583700">
    <property type="protein sequence ID" value="BAJ84582.1"/>
    <property type="molecule type" value="Genomic_DNA"/>
</dbReference>
<dbReference type="EMBL" id="AP008208">
    <property type="protein sequence ID" value="BAF08449.1"/>
    <property type="status" value="ALT_SEQ"/>
    <property type="molecule type" value="Genomic_DNA"/>
</dbReference>
<dbReference type="EMBL" id="AP014958">
    <property type="protein sequence ID" value="BAS78078.1"/>
    <property type="status" value="ALT_SEQ"/>
    <property type="molecule type" value="Genomic_DNA"/>
</dbReference>
<dbReference type="RefSeq" id="XP_015622837.1">
    <property type="nucleotide sequence ID" value="XM_015767351.1"/>
</dbReference>
<dbReference type="SMR" id="F1SZ44"/>
<dbReference type="FunCoup" id="F1SZ44">
    <property type="interactions" value="2"/>
</dbReference>
<dbReference type="STRING" id="39947.F1SZ44"/>
<dbReference type="PaxDb" id="39947-F1SZ44"/>
<dbReference type="EnsemblPlants" id="Os02t0274000-03">
    <property type="protein sequence ID" value="Os02t0274000-03"/>
    <property type="gene ID" value="Os02g0274000"/>
</dbReference>
<dbReference type="Gramene" id="Os02t0274000-03">
    <property type="protein sequence ID" value="Os02t0274000-03"/>
    <property type="gene ID" value="Os02g0274000"/>
</dbReference>
<dbReference type="KEGG" id="dosa:Os02g0274000"/>
<dbReference type="eggNOG" id="ENOG502S1SV">
    <property type="taxonomic scope" value="Eukaryota"/>
</dbReference>
<dbReference type="HOGENOM" id="CLU_104365_2_1_1"/>
<dbReference type="InParanoid" id="F1SZ44"/>
<dbReference type="OrthoDB" id="676822at2759"/>
<dbReference type="Proteomes" id="UP000000763">
    <property type="component" value="Chromosome 2"/>
</dbReference>
<dbReference type="Proteomes" id="UP000059680">
    <property type="component" value="Chromosome 2"/>
</dbReference>
<dbReference type="GO" id="GO:0009507">
    <property type="term" value="C:chloroplast"/>
    <property type="evidence" value="ECO:0000318"/>
    <property type="project" value="GO_Central"/>
</dbReference>
<dbReference type="GO" id="GO:0005739">
    <property type="term" value="C:mitochondrion"/>
    <property type="evidence" value="ECO:0000314"/>
    <property type="project" value="UniProtKB"/>
</dbReference>
<dbReference type="GO" id="GO:0009658">
    <property type="term" value="P:chloroplast organization"/>
    <property type="evidence" value="ECO:0000318"/>
    <property type="project" value="GO_Central"/>
</dbReference>
<dbReference type="GO" id="GO:0010027">
    <property type="term" value="P:thylakoid membrane organization"/>
    <property type="evidence" value="ECO:0000318"/>
    <property type="project" value="GO_Central"/>
</dbReference>
<dbReference type="InterPro" id="IPR040299">
    <property type="entry name" value="RF2K-like"/>
</dbReference>
<dbReference type="PANTHER" id="PTHR34938">
    <property type="entry name" value="PROTEIN FERTILITY RESTORER RF2, MITOCHONDRIAL"/>
    <property type="match status" value="1"/>
</dbReference>
<dbReference type="PANTHER" id="PTHR34938:SF1">
    <property type="entry name" value="PROTEIN FERTILITY RESTORER RF2, MITOCHONDRIAL"/>
    <property type="match status" value="1"/>
</dbReference>
<feature type="transit peptide" description="Mitochondrion" evidence="1">
    <location>
        <begin position="1"/>
        <end position="52"/>
    </location>
</feature>
<feature type="chain" id="PRO_0000445238" description="Protein FERTILITY RESTORER RF2, mitochondrial">
    <location>
        <begin position="53"/>
        <end position="152"/>
    </location>
</feature>
<feature type="region of interest" description="Disordered" evidence="2">
    <location>
        <begin position="52"/>
        <end position="101"/>
    </location>
</feature>
<feature type="compositionally biased region" description="Polar residues" evidence="2">
    <location>
        <begin position="52"/>
        <end position="69"/>
    </location>
</feature>
<organism>
    <name type="scientific">Oryza sativa subsp. japonica</name>
    <name type="common">Rice</name>
    <dbReference type="NCBI Taxonomy" id="39947"/>
    <lineage>
        <taxon>Eukaryota</taxon>
        <taxon>Viridiplantae</taxon>
        <taxon>Streptophyta</taxon>
        <taxon>Embryophyta</taxon>
        <taxon>Tracheophyta</taxon>
        <taxon>Spermatophyta</taxon>
        <taxon>Magnoliopsida</taxon>
        <taxon>Liliopsida</taxon>
        <taxon>Poales</taxon>
        <taxon>Poaceae</taxon>
        <taxon>BOP clade</taxon>
        <taxon>Oryzoideae</taxon>
        <taxon>Oryzeae</taxon>
        <taxon>Oryzinae</taxon>
        <taxon>Oryza</taxon>
        <taxon>Oryza sativa</taxon>
    </lineage>
</organism>
<protein>
    <recommendedName>
        <fullName evidence="5">Protein FERTILITY RESTORER RF2, mitochondrial</fullName>
    </recommendedName>
</protein>
<accession>F1SZ44</accession>
<accession>Q0E239</accession>
<keyword id="KW-0496">Mitochondrion</keyword>
<keyword id="KW-1185">Reference proteome</keyword>
<keyword id="KW-0809">Transit peptide</keyword>
<reference key="1">
    <citation type="journal article" date="2011" name="Plant J.">
        <title>The fertility restorer gene, Rf2, for Lead Rice-type cytoplasmic male sterility of rice encodes a mitochondrial glycine-rich protein.</title>
        <authorList>
            <person name="Itabashi E."/>
            <person name="Iwata N."/>
            <person name="Fujii S."/>
            <person name="Kazama T."/>
            <person name="Toriyama K."/>
        </authorList>
    </citation>
    <scope>NUCLEOTIDE SEQUENCE [GENOMIC DNA]</scope>
    <scope>FUNCTION</scope>
    <scope>SUBCELLULAR LOCATION</scope>
    <scope>DEVELOPMENTAL STAGE</scope>
    <source>
        <strain>cv. Taichung 65</strain>
    </source>
</reference>
<reference key="2">
    <citation type="journal article" date="2005" name="Nature">
        <title>The map-based sequence of the rice genome.</title>
        <authorList>
            <consortium name="International rice genome sequencing project (IRGSP)"/>
        </authorList>
    </citation>
    <scope>NUCLEOTIDE SEQUENCE [LARGE SCALE GENOMIC DNA]</scope>
    <source>
        <strain>cv. Nipponbare</strain>
    </source>
</reference>
<reference key="3">
    <citation type="journal article" date="2008" name="Nucleic Acids Res.">
        <title>The rice annotation project database (RAP-DB): 2008 update.</title>
        <authorList>
            <consortium name="The rice annotation project (RAP)"/>
        </authorList>
    </citation>
    <scope>GENOME REANNOTATION</scope>
    <source>
        <strain>cv. Nipponbare</strain>
    </source>
</reference>
<reference key="4">
    <citation type="journal article" date="2013" name="Rice">
        <title>Improvement of the Oryza sativa Nipponbare reference genome using next generation sequence and optical map data.</title>
        <authorList>
            <person name="Kawahara Y."/>
            <person name="de la Bastide M."/>
            <person name="Hamilton J.P."/>
            <person name="Kanamori H."/>
            <person name="McCombie W.R."/>
            <person name="Ouyang S."/>
            <person name="Schwartz D.C."/>
            <person name="Tanaka T."/>
            <person name="Wu J."/>
            <person name="Zhou S."/>
            <person name="Childs K.L."/>
            <person name="Davidson R.M."/>
            <person name="Lin H."/>
            <person name="Quesada-Ocampo L."/>
            <person name="Vaillancourt B."/>
            <person name="Sakai H."/>
            <person name="Lee S.S."/>
            <person name="Kim J."/>
            <person name="Numa H."/>
            <person name="Itoh T."/>
            <person name="Buell C.R."/>
            <person name="Matsumoto T."/>
        </authorList>
    </citation>
    <scope>GENOME REANNOTATION</scope>
    <source>
        <strain>cv. Nipponbare</strain>
    </source>
</reference>
<sequence length="152" mass="16132">MSTLVTCSLPGAVTTHASTRRFGGSQFQTSQASCISFKREVSAKAVLRSVRCNATQTQSAQRKSSTATVKRSDPKGKTQGPKLDDGSGGFPPFRFGKGGGGGGGGGGGSNYFGGFLLFTCVLLLDYLKEFEKNLIARRQRAGYDANNDMFQQ</sequence>
<evidence type="ECO:0000255" key="1"/>
<evidence type="ECO:0000256" key="2">
    <source>
        <dbReference type="SAM" id="MobiDB-lite"/>
    </source>
</evidence>
<evidence type="ECO:0000269" key="3">
    <source>
    </source>
</evidence>
<evidence type="ECO:0000303" key="4">
    <source>
    </source>
</evidence>
<evidence type="ECO:0000305" key="5"/>
<evidence type="ECO:0000312" key="6">
    <source>
        <dbReference type="EMBL" id="BAF08449.1"/>
    </source>
</evidence>
<name>RF2N_ORYSJ</name>
<comment type="function">
    <text evidence="3">Non-functional allele of the RF2 fertility restorer of rice varieties with LD-type cytoplasmic male sterility (CMS) (PubMed:21265890). Non-functional RF2 alleles are found in japonica cultivars Taichung 65 and Nipponbare (AC F1SZ44), and is due to the presence of Thr-78 which replaces Ile-78 in the functional allele (PubMed:21265890). Functional allele is found in the japonica cultivars Fukuyama and Owarihatamochi (AC F1SZ42), and indica cultivar Kasalath (AC F1SZ41) (PubMed:21265890).</text>
</comment>
<comment type="subcellular location">
    <subcellularLocation>
        <location evidence="3">Mitochondrion</location>
    </subcellularLocation>
</comment>
<comment type="developmental stage">
    <text evidence="3">Specifically expressed during anther development, from the uninucleate pollen stage to the tricellular pollen stage, with the highest expression at the tricellular pollen stage.</text>
</comment>
<comment type="sequence caution" evidence="5">
    <conflict type="erroneous gene model prediction">
        <sequence resource="EMBL-CDS" id="BAF08449"/>
    </conflict>
</comment>
<comment type="sequence caution" evidence="5">
    <conflict type="erroneous gene model prediction">
        <sequence resource="EMBL-CDS" id="BAS78078"/>
    </conflict>
</comment>
<proteinExistence type="evidence at transcript level"/>
<gene>
    <name evidence="4" type="primary">RF2</name>
    <name evidence="6" type="ordered locus">Os02g0274000</name>
    <name evidence="5" type="ordered locus">LOC_Os02g17380</name>
</gene>